<comment type="function">
    <text evidence="1">ATP-dependent serine protease that mediates the selective degradation of mutant and abnormal proteins as well as certain short-lived regulatory proteins. Required for cellular homeostasis and for survival from DNA damage and developmental changes induced by stress. Degrades polypeptides processively to yield small peptide fragments that are 5 to 10 amino acids long. Binds to DNA in a double-stranded, site-specific manner.</text>
</comment>
<comment type="catalytic activity">
    <reaction evidence="1">
        <text>Hydrolysis of proteins in presence of ATP.</text>
        <dbReference type="EC" id="3.4.21.53"/>
    </reaction>
</comment>
<comment type="subunit">
    <text evidence="1">Homohexamer. Organized in a ring with a central cavity.</text>
</comment>
<comment type="subcellular location">
    <subcellularLocation>
        <location evidence="1">Cytoplasm</location>
    </subcellularLocation>
</comment>
<comment type="induction">
    <text evidence="1">By heat shock.</text>
</comment>
<comment type="similarity">
    <text evidence="1">Belongs to the peptidase S16 family.</text>
</comment>
<sequence length="874" mass="91415">MTQLPHVRVDHMPQIRVLPVLPLDDAVVLPGMVVSLDMSDEQTRAAVDAARTGGSAGSSDARAPGISSRAAGRPAEVLLVPRVGGELAEVATVGVIEQVGRLPRGGSAAVVRGTARAQVGGVRPAPAGTDTTGTGTADATSGAGSGAGVQWVDAVVLDDSAATPFGALDDPAGTRAGSPADEAARVDKLAKEYRALVTDLLRQRGAWQVVDSVSAITDPGTLADTAGYSSYLTTAQKIELLGTPAVGTRLERLLTWTKEHLAEQDVAETIRRDVQEGMDRQQREFLLRRQLEAVRKELSELDGSGGGADGASGSEPADYRARVEAADLPEKVRAAALKEVDKLERTSDSSPEGGWIRTWLDTVLDLPWNVRAEDSYDIIAARAVLDADHAGLDDVKDRIIEHLAVRRRRADAGLGVVGGRRGGAVLALAGPPGVGKTSLGESIARAMGRSFVRVALGGVRDEAEIRGHRRTYVGALPGRIVRAIREAGSMNPVVLLDEVDKLGADYRGDPTAALLEVLDPEQNHTFRDHYLEVELDLSDVLFLATANVLEAIPAPLLDRMELIRLDGYTEDEKVVIARDHLLHRQLDRAGLAEGDVSVGDDALHALAGEYTREAGVRDLERSIARLLRKVVAQVALGAAALPVTIDAGDLTGYLGRPRHTPESAERTALPGVATGLAVTGAGGDVLFVEASLADAETGGGGITLTGQLGDVMKESAQIALSYLRSHGVELELPVGDLADRGVHVHVPAGAVPKDGPSAGVTMTTALASLLSGRPVRADVAMTGEVSLTGRVLPIGGVKQKLLAAHRAGLTTVLLPQRNGPDLDDVPAPVRDALTVHLVTDVREVLDLALEPAFDADHGGRSPGRAGHSPTALAA</sequence>
<reference key="1">
    <citation type="journal article" date="2007" name="Genome Res.">
        <title>Genome characteristics of facultatively symbiotic Frankia sp. strains reflect host range and host plant biogeography.</title>
        <authorList>
            <person name="Normand P."/>
            <person name="Lapierre P."/>
            <person name="Tisa L.S."/>
            <person name="Gogarten J.P."/>
            <person name="Alloisio N."/>
            <person name="Bagnarol E."/>
            <person name="Bassi C.A."/>
            <person name="Berry A.M."/>
            <person name="Bickhart D.M."/>
            <person name="Choisne N."/>
            <person name="Couloux A."/>
            <person name="Cournoyer B."/>
            <person name="Cruveiller S."/>
            <person name="Daubin V."/>
            <person name="Demange N."/>
            <person name="Francino M.P."/>
            <person name="Goltsman E."/>
            <person name="Huang Y."/>
            <person name="Kopp O.R."/>
            <person name="Labarre L."/>
            <person name="Lapidus A."/>
            <person name="Lavire C."/>
            <person name="Marechal J."/>
            <person name="Martinez M."/>
            <person name="Mastronunzio J.E."/>
            <person name="Mullin B.C."/>
            <person name="Niemann J."/>
            <person name="Pujic P."/>
            <person name="Rawnsley T."/>
            <person name="Rouy Z."/>
            <person name="Schenowitz C."/>
            <person name="Sellstedt A."/>
            <person name="Tavares F."/>
            <person name="Tomkins J.P."/>
            <person name="Vallenet D."/>
            <person name="Valverde C."/>
            <person name="Wall L.G."/>
            <person name="Wang Y."/>
            <person name="Medigue C."/>
            <person name="Benson D.R."/>
        </authorList>
    </citation>
    <scope>NUCLEOTIDE SEQUENCE [LARGE SCALE GENOMIC DNA]</scope>
    <source>
        <strain>DSM 45986 / CECT 9034 / ACN14a</strain>
    </source>
</reference>
<dbReference type="EC" id="3.4.21.53" evidence="1"/>
<dbReference type="EMBL" id="CT573213">
    <property type="protein sequence ID" value="CAJ60416.1"/>
    <property type="molecule type" value="Genomic_DNA"/>
</dbReference>
<dbReference type="SMR" id="Q0RPW3"/>
<dbReference type="STRING" id="326424.FRAAL1764"/>
<dbReference type="KEGG" id="fal:FRAAL1764"/>
<dbReference type="eggNOG" id="COG0466">
    <property type="taxonomic scope" value="Bacteria"/>
</dbReference>
<dbReference type="HOGENOM" id="CLU_004109_4_3_11"/>
<dbReference type="Proteomes" id="UP000000657">
    <property type="component" value="Chromosome"/>
</dbReference>
<dbReference type="GO" id="GO:0005737">
    <property type="term" value="C:cytoplasm"/>
    <property type="evidence" value="ECO:0007669"/>
    <property type="project" value="UniProtKB-SubCell"/>
</dbReference>
<dbReference type="GO" id="GO:0005524">
    <property type="term" value="F:ATP binding"/>
    <property type="evidence" value="ECO:0007669"/>
    <property type="project" value="UniProtKB-UniRule"/>
</dbReference>
<dbReference type="GO" id="GO:0016887">
    <property type="term" value="F:ATP hydrolysis activity"/>
    <property type="evidence" value="ECO:0007669"/>
    <property type="project" value="UniProtKB-UniRule"/>
</dbReference>
<dbReference type="GO" id="GO:0004176">
    <property type="term" value="F:ATP-dependent peptidase activity"/>
    <property type="evidence" value="ECO:0007669"/>
    <property type="project" value="UniProtKB-UniRule"/>
</dbReference>
<dbReference type="GO" id="GO:0043565">
    <property type="term" value="F:sequence-specific DNA binding"/>
    <property type="evidence" value="ECO:0007669"/>
    <property type="project" value="UniProtKB-UniRule"/>
</dbReference>
<dbReference type="GO" id="GO:0004252">
    <property type="term" value="F:serine-type endopeptidase activity"/>
    <property type="evidence" value="ECO:0007669"/>
    <property type="project" value="UniProtKB-UniRule"/>
</dbReference>
<dbReference type="GO" id="GO:0034605">
    <property type="term" value="P:cellular response to heat"/>
    <property type="evidence" value="ECO:0007669"/>
    <property type="project" value="UniProtKB-UniRule"/>
</dbReference>
<dbReference type="GO" id="GO:0006515">
    <property type="term" value="P:protein quality control for misfolded or incompletely synthesized proteins"/>
    <property type="evidence" value="ECO:0007669"/>
    <property type="project" value="UniProtKB-UniRule"/>
</dbReference>
<dbReference type="CDD" id="cd19500">
    <property type="entry name" value="RecA-like_Lon"/>
    <property type="match status" value="1"/>
</dbReference>
<dbReference type="FunFam" id="3.40.50.300:FF:000021">
    <property type="entry name" value="Lon protease homolog"/>
    <property type="match status" value="1"/>
</dbReference>
<dbReference type="Gene3D" id="1.10.8.60">
    <property type="match status" value="1"/>
</dbReference>
<dbReference type="Gene3D" id="1.20.5.5270">
    <property type="match status" value="1"/>
</dbReference>
<dbReference type="Gene3D" id="1.20.58.1480">
    <property type="match status" value="1"/>
</dbReference>
<dbReference type="Gene3D" id="3.30.230.10">
    <property type="match status" value="1"/>
</dbReference>
<dbReference type="Gene3D" id="2.30.130.40">
    <property type="entry name" value="LON domain-like"/>
    <property type="match status" value="1"/>
</dbReference>
<dbReference type="Gene3D" id="3.40.50.300">
    <property type="entry name" value="P-loop containing nucleotide triphosphate hydrolases"/>
    <property type="match status" value="1"/>
</dbReference>
<dbReference type="HAMAP" id="MF_01973">
    <property type="entry name" value="lon_bact"/>
    <property type="match status" value="1"/>
</dbReference>
<dbReference type="InterPro" id="IPR003593">
    <property type="entry name" value="AAA+_ATPase"/>
</dbReference>
<dbReference type="InterPro" id="IPR003959">
    <property type="entry name" value="ATPase_AAA_core"/>
</dbReference>
<dbReference type="InterPro" id="IPR027543">
    <property type="entry name" value="Lon_bac"/>
</dbReference>
<dbReference type="InterPro" id="IPR004815">
    <property type="entry name" value="Lon_bac/euk-typ"/>
</dbReference>
<dbReference type="InterPro" id="IPR054594">
    <property type="entry name" value="Lon_lid"/>
</dbReference>
<dbReference type="InterPro" id="IPR008269">
    <property type="entry name" value="Lon_proteolytic"/>
</dbReference>
<dbReference type="InterPro" id="IPR027065">
    <property type="entry name" value="Lon_Prtase"/>
</dbReference>
<dbReference type="InterPro" id="IPR003111">
    <property type="entry name" value="Lon_prtase_N"/>
</dbReference>
<dbReference type="InterPro" id="IPR046336">
    <property type="entry name" value="Lon_prtase_N_sf"/>
</dbReference>
<dbReference type="InterPro" id="IPR027417">
    <property type="entry name" value="P-loop_NTPase"/>
</dbReference>
<dbReference type="InterPro" id="IPR008268">
    <property type="entry name" value="Peptidase_S16_AS"/>
</dbReference>
<dbReference type="InterPro" id="IPR015947">
    <property type="entry name" value="PUA-like_sf"/>
</dbReference>
<dbReference type="InterPro" id="IPR020568">
    <property type="entry name" value="Ribosomal_Su5_D2-typ_SF"/>
</dbReference>
<dbReference type="InterPro" id="IPR014721">
    <property type="entry name" value="Ribsml_uS5_D2-typ_fold_subgr"/>
</dbReference>
<dbReference type="NCBIfam" id="TIGR00763">
    <property type="entry name" value="lon"/>
    <property type="match status" value="1"/>
</dbReference>
<dbReference type="PANTHER" id="PTHR10046">
    <property type="entry name" value="ATP DEPENDENT LON PROTEASE FAMILY MEMBER"/>
    <property type="match status" value="1"/>
</dbReference>
<dbReference type="Pfam" id="PF00004">
    <property type="entry name" value="AAA"/>
    <property type="match status" value="1"/>
</dbReference>
<dbReference type="Pfam" id="PF05362">
    <property type="entry name" value="Lon_C"/>
    <property type="match status" value="1"/>
</dbReference>
<dbReference type="Pfam" id="PF22667">
    <property type="entry name" value="Lon_lid"/>
    <property type="match status" value="1"/>
</dbReference>
<dbReference type="Pfam" id="PF02190">
    <property type="entry name" value="LON_substr_bdg"/>
    <property type="match status" value="1"/>
</dbReference>
<dbReference type="PIRSF" id="PIRSF001174">
    <property type="entry name" value="Lon_proteas"/>
    <property type="match status" value="1"/>
</dbReference>
<dbReference type="PRINTS" id="PR00830">
    <property type="entry name" value="ENDOLAPTASE"/>
</dbReference>
<dbReference type="SMART" id="SM00382">
    <property type="entry name" value="AAA"/>
    <property type="match status" value="1"/>
</dbReference>
<dbReference type="SMART" id="SM00464">
    <property type="entry name" value="LON"/>
    <property type="match status" value="1"/>
</dbReference>
<dbReference type="SUPFAM" id="SSF52540">
    <property type="entry name" value="P-loop containing nucleoside triphosphate hydrolases"/>
    <property type="match status" value="1"/>
</dbReference>
<dbReference type="SUPFAM" id="SSF88697">
    <property type="entry name" value="PUA domain-like"/>
    <property type="match status" value="1"/>
</dbReference>
<dbReference type="SUPFAM" id="SSF54211">
    <property type="entry name" value="Ribosomal protein S5 domain 2-like"/>
    <property type="match status" value="1"/>
</dbReference>
<dbReference type="PROSITE" id="PS51787">
    <property type="entry name" value="LON_N"/>
    <property type="match status" value="1"/>
</dbReference>
<dbReference type="PROSITE" id="PS51786">
    <property type="entry name" value="LON_PROTEOLYTIC"/>
    <property type="match status" value="1"/>
</dbReference>
<dbReference type="PROSITE" id="PS01046">
    <property type="entry name" value="LON_SER"/>
    <property type="match status" value="1"/>
</dbReference>
<accession>Q0RPW3</accession>
<feature type="chain" id="PRO_0000396567" description="Lon protease">
    <location>
        <begin position="1"/>
        <end position="874"/>
    </location>
</feature>
<feature type="domain" description="Lon N-terminal" evidence="3">
    <location>
        <begin position="18"/>
        <end position="261"/>
    </location>
</feature>
<feature type="domain" description="Lon proteolytic" evidence="2">
    <location>
        <begin position="667"/>
        <end position="851"/>
    </location>
</feature>
<feature type="region of interest" description="Disordered" evidence="4">
    <location>
        <begin position="47"/>
        <end position="68"/>
    </location>
</feature>
<feature type="region of interest" description="Disordered" evidence="4">
    <location>
        <begin position="120"/>
        <end position="144"/>
    </location>
</feature>
<feature type="region of interest" description="Disordered" evidence="4">
    <location>
        <begin position="298"/>
        <end position="318"/>
    </location>
</feature>
<feature type="region of interest" description="Disordered" evidence="4">
    <location>
        <begin position="853"/>
        <end position="874"/>
    </location>
</feature>
<feature type="compositionally biased region" description="Low complexity" evidence="4">
    <location>
        <begin position="124"/>
        <end position="142"/>
    </location>
</feature>
<feature type="active site" evidence="1">
    <location>
        <position position="757"/>
    </location>
</feature>
<feature type="active site" evidence="1">
    <location>
        <position position="800"/>
    </location>
</feature>
<feature type="binding site" evidence="1">
    <location>
        <begin position="430"/>
        <end position="437"/>
    </location>
    <ligand>
        <name>ATP</name>
        <dbReference type="ChEBI" id="CHEBI:30616"/>
    </ligand>
</feature>
<keyword id="KW-0067">ATP-binding</keyword>
<keyword id="KW-0963">Cytoplasm</keyword>
<keyword id="KW-0378">Hydrolase</keyword>
<keyword id="KW-0547">Nucleotide-binding</keyword>
<keyword id="KW-0645">Protease</keyword>
<keyword id="KW-1185">Reference proteome</keyword>
<keyword id="KW-0720">Serine protease</keyword>
<keyword id="KW-0346">Stress response</keyword>
<proteinExistence type="inferred from homology"/>
<gene>
    <name evidence="1" type="primary">lon</name>
    <name type="ordered locus">FRAAL1764</name>
</gene>
<name>LON_FRAAA</name>
<protein>
    <recommendedName>
        <fullName evidence="1">Lon protease</fullName>
        <ecNumber evidence="1">3.4.21.53</ecNumber>
    </recommendedName>
    <alternativeName>
        <fullName evidence="1">ATP-dependent protease La</fullName>
    </alternativeName>
</protein>
<evidence type="ECO:0000255" key="1">
    <source>
        <dbReference type="HAMAP-Rule" id="MF_01973"/>
    </source>
</evidence>
<evidence type="ECO:0000255" key="2">
    <source>
        <dbReference type="PROSITE-ProRule" id="PRU01122"/>
    </source>
</evidence>
<evidence type="ECO:0000255" key="3">
    <source>
        <dbReference type="PROSITE-ProRule" id="PRU01123"/>
    </source>
</evidence>
<evidence type="ECO:0000256" key="4">
    <source>
        <dbReference type="SAM" id="MobiDB-lite"/>
    </source>
</evidence>
<organism>
    <name type="scientific">Frankia alni (strain DSM 45986 / CECT 9034 / ACN14a)</name>
    <dbReference type="NCBI Taxonomy" id="326424"/>
    <lineage>
        <taxon>Bacteria</taxon>
        <taxon>Bacillati</taxon>
        <taxon>Actinomycetota</taxon>
        <taxon>Actinomycetes</taxon>
        <taxon>Frankiales</taxon>
        <taxon>Frankiaceae</taxon>
        <taxon>Frankia</taxon>
    </lineage>
</organism>